<protein>
    <recommendedName>
        <fullName evidence="1">Dual-specificity RNA methyltransferase RlmN</fullName>
        <ecNumber evidence="1">2.1.1.192</ecNumber>
    </recommendedName>
    <alternativeName>
        <fullName evidence="1">23S rRNA (adenine(2503)-C(2))-methyltransferase</fullName>
    </alternativeName>
    <alternativeName>
        <fullName evidence="1">23S rRNA m2A2503 methyltransferase</fullName>
    </alternativeName>
    <alternativeName>
        <fullName evidence="1">Ribosomal RNA large subunit methyltransferase N</fullName>
    </alternativeName>
    <alternativeName>
        <fullName evidence="1">tRNA (adenine(37)-C(2))-methyltransferase</fullName>
    </alternativeName>
    <alternativeName>
        <fullName evidence="1">tRNA m2A37 methyltransferase</fullName>
    </alternativeName>
</protein>
<feature type="chain" id="PRO_0000350139" description="Dual-specificity RNA methyltransferase RlmN">
    <location>
        <begin position="1"/>
        <end position="370"/>
    </location>
</feature>
<feature type="domain" description="Radical SAM core" evidence="2">
    <location>
        <begin position="99"/>
        <end position="331"/>
    </location>
</feature>
<feature type="active site" description="Proton acceptor" evidence="1">
    <location>
        <position position="93"/>
    </location>
</feature>
<feature type="active site" description="S-methylcysteine intermediate" evidence="1">
    <location>
        <position position="336"/>
    </location>
</feature>
<feature type="binding site" evidence="1">
    <location>
        <position position="113"/>
    </location>
    <ligand>
        <name>[4Fe-4S] cluster</name>
        <dbReference type="ChEBI" id="CHEBI:49883"/>
        <note>4Fe-4S-S-AdoMet</note>
    </ligand>
</feature>
<feature type="binding site" evidence="1">
    <location>
        <position position="117"/>
    </location>
    <ligand>
        <name>[4Fe-4S] cluster</name>
        <dbReference type="ChEBI" id="CHEBI:49883"/>
        <note>4Fe-4S-S-AdoMet</note>
    </ligand>
</feature>
<feature type="binding site" evidence="1">
    <location>
        <position position="120"/>
    </location>
    <ligand>
        <name>[4Fe-4S] cluster</name>
        <dbReference type="ChEBI" id="CHEBI:49883"/>
        <note>4Fe-4S-S-AdoMet</note>
    </ligand>
</feature>
<feature type="binding site" evidence="1">
    <location>
        <begin position="162"/>
        <end position="163"/>
    </location>
    <ligand>
        <name>S-adenosyl-L-methionine</name>
        <dbReference type="ChEBI" id="CHEBI:59789"/>
    </ligand>
</feature>
<feature type="binding site" evidence="1">
    <location>
        <position position="194"/>
    </location>
    <ligand>
        <name>S-adenosyl-L-methionine</name>
        <dbReference type="ChEBI" id="CHEBI:59789"/>
    </ligand>
</feature>
<feature type="binding site" evidence="1">
    <location>
        <begin position="216"/>
        <end position="218"/>
    </location>
    <ligand>
        <name>S-adenosyl-L-methionine</name>
        <dbReference type="ChEBI" id="CHEBI:59789"/>
    </ligand>
</feature>
<feature type="binding site" evidence="1">
    <location>
        <position position="293"/>
    </location>
    <ligand>
        <name>S-adenosyl-L-methionine</name>
        <dbReference type="ChEBI" id="CHEBI:59789"/>
    </ligand>
</feature>
<feature type="disulfide bond" description="(transient)" evidence="1">
    <location>
        <begin position="106"/>
        <end position="336"/>
    </location>
</feature>
<gene>
    <name evidence="1" type="primary">rlmN</name>
    <name type="ordered locus">CBU_1252</name>
</gene>
<reference key="1">
    <citation type="journal article" date="2003" name="Proc. Natl. Acad. Sci. U.S.A.">
        <title>Complete genome sequence of the Q-fever pathogen, Coxiella burnetii.</title>
        <authorList>
            <person name="Seshadri R."/>
            <person name="Paulsen I.T."/>
            <person name="Eisen J.A."/>
            <person name="Read T.D."/>
            <person name="Nelson K.E."/>
            <person name="Nelson W.C."/>
            <person name="Ward N.L."/>
            <person name="Tettelin H."/>
            <person name="Davidsen T.M."/>
            <person name="Beanan M.J."/>
            <person name="DeBoy R.T."/>
            <person name="Daugherty S.C."/>
            <person name="Brinkac L.M."/>
            <person name="Madupu R."/>
            <person name="Dodson R.J."/>
            <person name="Khouri H.M."/>
            <person name="Lee K.H."/>
            <person name="Carty H.A."/>
            <person name="Scanlan D."/>
            <person name="Heinzen R.A."/>
            <person name="Thompson H.A."/>
            <person name="Samuel J.E."/>
            <person name="Fraser C.M."/>
            <person name="Heidelberg J.F."/>
        </authorList>
    </citation>
    <scope>NUCLEOTIDE SEQUENCE [LARGE SCALE GENOMIC DNA]</scope>
    <source>
        <strain>RSA 493 / Nine Mile phase I</strain>
    </source>
</reference>
<accession>Q83C77</accession>
<name>RLMN_COXBU</name>
<comment type="function">
    <text evidence="1">Specifically methylates position 2 of adenine 2503 in 23S rRNA and position 2 of adenine 37 in tRNAs. m2A2503 modification seems to play a crucial role in the proofreading step occurring at the peptidyl transferase center and thus would serve to optimize ribosomal fidelity.</text>
</comment>
<comment type="catalytic activity">
    <reaction evidence="1">
        <text>adenosine(2503) in 23S rRNA + 2 reduced [2Fe-2S]-[ferredoxin] + 2 S-adenosyl-L-methionine = 2-methyladenosine(2503) in 23S rRNA + 5'-deoxyadenosine + L-methionine + 2 oxidized [2Fe-2S]-[ferredoxin] + S-adenosyl-L-homocysteine</text>
        <dbReference type="Rhea" id="RHEA:42916"/>
        <dbReference type="Rhea" id="RHEA-COMP:10000"/>
        <dbReference type="Rhea" id="RHEA-COMP:10001"/>
        <dbReference type="Rhea" id="RHEA-COMP:10152"/>
        <dbReference type="Rhea" id="RHEA-COMP:10282"/>
        <dbReference type="ChEBI" id="CHEBI:17319"/>
        <dbReference type="ChEBI" id="CHEBI:33737"/>
        <dbReference type="ChEBI" id="CHEBI:33738"/>
        <dbReference type="ChEBI" id="CHEBI:57844"/>
        <dbReference type="ChEBI" id="CHEBI:57856"/>
        <dbReference type="ChEBI" id="CHEBI:59789"/>
        <dbReference type="ChEBI" id="CHEBI:74411"/>
        <dbReference type="ChEBI" id="CHEBI:74497"/>
        <dbReference type="EC" id="2.1.1.192"/>
    </reaction>
</comment>
<comment type="catalytic activity">
    <reaction evidence="1">
        <text>adenosine(37) in tRNA + 2 reduced [2Fe-2S]-[ferredoxin] + 2 S-adenosyl-L-methionine = 2-methyladenosine(37) in tRNA + 5'-deoxyadenosine + L-methionine + 2 oxidized [2Fe-2S]-[ferredoxin] + S-adenosyl-L-homocysteine</text>
        <dbReference type="Rhea" id="RHEA:43332"/>
        <dbReference type="Rhea" id="RHEA-COMP:10000"/>
        <dbReference type="Rhea" id="RHEA-COMP:10001"/>
        <dbReference type="Rhea" id="RHEA-COMP:10162"/>
        <dbReference type="Rhea" id="RHEA-COMP:10485"/>
        <dbReference type="ChEBI" id="CHEBI:17319"/>
        <dbReference type="ChEBI" id="CHEBI:33737"/>
        <dbReference type="ChEBI" id="CHEBI:33738"/>
        <dbReference type="ChEBI" id="CHEBI:57844"/>
        <dbReference type="ChEBI" id="CHEBI:57856"/>
        <dbReference type="ChEBI" id="CHEBI:59789"/>
        <dbReference type="ChEBI" id="CHEBI:74411"/>
        <dbReference type="ChEBI" id="CHEBI:74497"/>
        <dbReference type="EC" id="2.1.1.192"/>
    </reaction>
</comment>
<comment type="cofactor">
    <cofactor evidence="1">
        <name>[4Fe-4S] cluster</name>
        <dbReference type="ChEBI" id="CHEBI:49883"/>
    </cofactor>
    <text evidence="1">Binds 1 [4Fe-4S] cluster. The cluster is coordinated with 3 cysteines and an exchangeable S-adenosyl-L-methionine.</text>
</comment>
<comment type="subcellular location">
    <subcellularLocation>
        <location evidence="1">Cytoplasm</location>
    </subcellularLocation>
</comment>
<comment type="miscellaneous">
    <text evidence="1">Reaction proceeds by a ping-pong mechanism involving intermediate methylation of a conserved cysteine residue.</text>
</comment>
<comment type="similarity">
    <text evidence="1">Belongs to the radical SAM superfamily. RlmN family.</text>
</comment>
<sequence>MTEKINLLNLSEPELQGFIASQGQPLYRATQLLQWIHQRGVTDFSLMTDLSKPFRQQLSEASFVRVPELALERVSADGTHKWLFRLADNNKIETVFIPDRKRGTLCVSSQVGCALNCSFCATGKEGFNRNLTLAEIIGQVWLAARLLKSPYKITNVVMMGMGEPLLNYEAVVAAMHLMMHDHAYGLSKYRVTLSTSGVIPAMRRLREESPVSLAVSLHAPNDALRNVLIPLNKKYSLDQLIPLCRDYYSRGSKRCVTFEYVMIEGMNDRLIDAKQLIRLLADVPCKINLIPFNSFQGTAYRCSTESAISVFQKCLMDAGFNTRVRRTRGDDIAGACGQLAGQFHDRTGRHQRWVQKQGHDFNRPIPAIDH</sequence>
<evidence type="ECO:0000255" key="1">
    <source>
        <dbReference type="HAMAP-Rule" id="MF_01849"/>
    </source>
</evidence>
<evidence type="ECO:0000255" key="2">
    <source>
        <dbReference type="PROSITE-ProRule" id="PRU01266"/>
    </source>
</evidence>
<keyword id="KW-0004">4Fe-4S</keyword>
<keyword id="KW-0963">Cytoplasm</keyword>
<keyword id="KW-1015">Disulfide bond</keyword>
<keyword id="KW-0408">Iron</keyword>
<keyword id="KW-0411">Iron-sulfur</keyword>
<keyword id="KW-0479">Metal-binding</keyword>
<keyword id="KW-0489">Methyltransferase</keyword>
<keyword id="KW-1185">Reference proteome</keyword>
<keyword id="KW-0698">rRNA processing</keyword>
<keyword id="KW-0949">S-adenosyl-L-methionine</keyword>
<keyword id="KW-0808">Transferase</keyword>
<keyword id="KW-0819">tRNA processing</keyword>
<organism>
    <name type="scientific">Coxiella burnetii (strain RSA 493 / Nine Mile phase I)</name>
    <dbReference type="NCBI Taxonomy" id="227377"/>
    <lineage>
        <taxon>Bacteria</taxon>
        <taxon>Pseudomonadati</taxon>
        <taxon>Pseudomonadota</taxon>
        <taxon>Gammaproteobacteria</taxon>
        <taxon>Legionellales</taxon>
        <taxon>Coxiellaceae</taxon>
        <taxon>Coxiella</taxon>
    </lineage>
</organism>
<dbReference type="EC" id="2.1.1.192" evidence="1"/>
<dbReference type="EMBL" id="AE016828">
    <property type="protein sequence ID" value="AAO90760.1"/>
    <property type="molecule type" value="Genomic_DNA"/>
</dbReference>
<dbReference type="RefSeq" id="NP_820246.1">
    <property type="nucleotide sequence ID" value="NC_002971.3"/>
</dbReference>
<dbReference type="RefSeq" id="WP_010958104.1">
    <property type="nucleotide sequence ID" value="NC_002971.4"/>
</dbReference>
<dbReference type="SMR" id="Q83C77"/>
<dbReference type="STRING" id="227377.CBU_1252"/>
<dbReference type="EnsemblBacteria" id="AAO90760">
    <property type="protein sequence ID" value="AAO90760"/>
    <property type="gene ID" value="CBU_1252"/>
</dbReference>
<dbReference type="GeneID" id="1209157"/>
<dbReference type="KEGG" id="cbu:CBU_1252"/>
<dbReference type="PATRIC" id="fig|227377.7.peg.1243"/>
<dbReference type="eggNOG" id="COG0820">
    <property type="taxonomic scope" value="Bacteria"/>
</dbReference>
<dbReference type="HOGENOM" id="CLU_029101_0_0_6"/>
<dbReference type="OrthoDB" id="9793973at2"/>
<dbReference type="Proteomes" id="UP000002671">
    <property type="component" value="Chromosome"/>
</dbReference>
<dbReference type="GO" id="GO:0005737">
    <property type="term" value="C:cytoplasm"/>
    <property type="evidence" value="ECO:0007669"/>
    <property type="project" value="UniProtKB-SubCell"/>
</dbReference>
<dbReference type="GO" id="GO:0051539">
    <property type="term" value="F:4 iron, 4 sulfur cluster binding"/>
    <property type="evidence" value="ECO:0007669"/>
    <property type="project" value="UniProtKB-UniRule"/>
</dbReference>
<dbReference type="GO" id="GO:0046872">
    <property type="term" value="F:metal ion binding"/>
    <property type="evidence" value="ECO:0007669"/>
    <property type="project" value="UniProtKB-KW"/>
</dbReference>
<dbReference type="GO" id="GO:0070040">
    <property type="term" value="F:rRNA (adenine(2503)-C2-)-methyltransferase activity"/>
    <property type="evidence" value="ECO:0007669"/>
    <property type="project" value="UniProtKB-UniRule"/>
</dbReference>
<dbReference type="GO" id="GO:0019843">
    <property type="term" value="F:rRNA binding"/>
    <property type="evidence" value="ECO:0007669"/>
    <property type="project" value="UniProtKB-UniRule"/>
</dbReference>
<dbReference type="GO" id="GO:0002935">
    <property type="term" value="F:tRNA (adenine(37)-C2)-methyltransferase activity"/>
    <property type="evidence" value="ECO:0007669"/>
    <property type="project" value="UniProtKB-UniRule"/>
</dbReference>
<dbReference type="GO" id="GO:0000049">
    <property type="term" value="F:tRNA binding"/>
    <property type="evidence" value="ECO:0007669"/>
    <property type="project" value="UniProtKB-UniRule"/>
</dbReference>
<dbReference type="GO" id="GO:0070475">
    <property type="term" value="P:rRNA base methylation"/>
    <property type="evidence" value="ECO:0000318"/>
    <property type="project" value="GO_Central"/>
</dbReference>
<dbReference type="GO" id="GO:0030488">
    <property type="term" value="P:tRNA methylation"/>
    <property type="evidence" value="ECO:0000318"/>
    <property type="project" value="GO_Central"/>
</dbReference>
<dbReference type="CDD" id="cd01335">
    <property type="entry name" value="Radical_SAM"/>
    <property type="match status" value="1"/>
</dbReference>
<dbReference type="FunFam" id="1.10.150.530:FF:000003">
    <property type="entry name" value="Dual-specificity RNA methyltransferase RlmN"/>
    <property type="match status" value="1"/>
</dbReference>
<dbReference type="FunFam" id="3.20.20.70:FF:000008">
    <property type="entry name" value="Dual-specificity RNA methyltransferase RlmN"/>
    <property type="match status" value="1"/>
</dbReference>
<dbReference type="Gene3D" id="1.10.150.530">
    <property type="match status" value="1"/>
</dbReference>
<dbReference type="Gene3D" id="3.20.20.70">
    <property type="entry name" value="Aldolase class I"/>
    <property type="match status" value="1"/>
</dbReference>
<dbReference type="HAMAP" id="MF_01849">
    <property type="entry name" value="RNA_methyltr_RlmN"/>
    <property type="match status" value="1"/>
</dbReference>
<dbReference type="InterPro" id="IPR013785">
    <property type="entry name" value="Aldolase_TIM"/>
</dbReference>
<dbReference type="InterPro" id="IPR040072">
    <property type="entry name" value="Methyltransferase_A"/>
</dbReference>
<dbReference type="InterPro" id="IPR048641">
    <property type="entry name" value="RlmN_N"/>
</dbReference>
<dbReference type="InterPro" id="IPR027492">
    <property type="entry name" value="RNA_MTrfase_RlmN"/>
</dbReference>
<dbReference type="InterPro" id="IPR004383">
    <property type="entry name" value="rRNA_lsu_MTrfase_RlmN/Cfr"/>
</dbReference>
<dbReference type="InterPro" id="IPR007197">
    <property type="entry name" value="rSAM"/>
</dbReference>
<dbReference type="NCBIfam" id="TIGR00048">
    <property type="entry name" value="rRNA_mod_RlmN"/>
    <property type="match status" value="1"/>
</dbReference>
<dbReference type="PANTHER" id="PTHR30544">
    <property type="entry name" value="23S RRNA METHYLTRANSFERASE"/>
    <property type="match status" value="1"/>
</dbReference>
<dbReference type="PANTHER" id="PTHR30544:SF5">
    <property type="entry name" value="RADICAL SAM CORE DOMAIN-CONTAINING PROTEIN"/>
    <property type="match status" value="1"/>
</dbReference>
<dbReference type="Pfam" id="PF04055">
    <property type="entry name" value="Radical_SAM"/>
    <property type="match status" value="1"/>
</dbReference>
<dbReference type="Pfam" id="PF21016">
    <property type="entry name" value="RlmN_N"/>
    <property type="match status" value="1"/>
</dbReference>
<dbReference type="PIRSF" id="PIRSF006004">
    <property type="entry name" value="CHP00048"/>
    <property type="match status" value="1"/>
</dbReference>
<dbReference type="SFLD" id="SFLDF00275">
    <property type="entry name" value="adenosine_C2_methyltransferase"/>
    <property type="match status" value="1"/>
</dbReference>
<dbReference type="SFLD" id="SFLDG01062">
    <property type="entry name" value="methyltransferase_(Class_A)"/>
    <property type="match status" value="1"/>
</dbReference>
<dbReference type="SUPFAM" id="SSF102114">
    <property type="entry name" value="Radical SAM enzymes"/>
    <property type="match status" value="1"/>
</dbReference>
<dbReference type="PROSITE" id="PS51918">
    <property type="entry name" value="RADICAL_SAM"/>
    <property type="match status" value="1"/>
</dbReference>
<proteinExistence type="inferred from homology"/>